<proteinExistence type="inferred from homology"/>
<accession>Q66FP9</accession>
<keyword id="KW-0963">Cytoplasm</keyword>
<keyword id="KW-0704">Schiff base</keyword>
<keyword id="KW-0784">Thiamine biosynthesis</keyword>
<keyword id="KW-0808">Transferase</keyword>
<gene>
    <name evidence="1" type="primary">thiG</name>
    <name type="ordered locus">YPTB0286</name>
</gene>
<feature type="chain" id="PRO_0000162883" description="Thiazole synthase">
    <location>
        <begin position="1"/>
        <end position="271"/>
    </location>
</feature>
<feature type="active site" description="Schiff-base intermediate with DXP" evidence="1">
    <location>
        <position position="95"/>
    </location>
</feature>
<feature type="binding site" evidence="1">
    <location>
        <position position="156"/>
    </location>
    <ligand>
        <name>1-deoxy-D-xylulose 5-phosphate</name>
        <dbReference type="ChEBI" id="CHEBI:57792"/>
    </ligand>
</feature>
<feature type="binding site" evidence="1">
    <location>
        <begin position="182"/>
        <end position="183"/>
    </location>
    <ligand>
        <name>1-deoxy-D-xylulose 5-phosphate</name>
        <dbReference type="ChEBI" id="CHEBI:57792"/>
    </ligand>
</feature>
<feature type="binding site" evidence="1">
    <location>
        <begin position="204"/>
        <end position="205"/>
    </location>
    <ligand>
        <name>1-deoxy-D-xylulose 5-phosphate</name>
        <dbReference type="ChEBI" id="CHEBI:57792"/>
    </ligand>
</feature>
<dbReference type="EC" id="2.8.1.10" evidence="1"/>
<dbReference type="EMBL" id="BX936398">
    <property type="protein sequence ID" value="CAH19526.1"/>
    <property type="molecule type" value="Genomic_DNA"/>
</dbReference>
<dbReference type="RefSeq" id="WP_002228257.1">
    <property type="nucleotide sequence ID" value="NZ_CP009712.1"/>
</dbReference>
<dbReference type="SMR" id="Q66FP9"/>
<dbReference type="KEGG" id="ypo:BZ17_2287"/>
<dbReference type="KEGG" id="yps:YPTB0286"/>
<dbReference type="PATRIC" id="fig|273123.14.peg.2418"/>
<dbReference type="UniPathway" id="UPA00060"/>
<dbReference type="Proteomes" id="UP000001011">
    <property type="component" value="Chromosome"/>
</dbReference>
<dbReference type="GO" id="GO:0005737">
    <property type="term" value="C:cytoplasm"/>
    <property type="evidence" value="ECO:0007669"/>
    <property type="project" value="UniProtKB-SubCell"/>
</dbReference>
<dbReference type="GO" id="GO:1990107">
    <property type="term" value="F:thiazole synthase activity"/>
    <property type="evidence" value="ECO:0007669"/>
    <property type="project" value="UniProtKB-EC"/>
</dbReference>
<dbReference type="GO" id="GO:0009229">
    <property type="term" value="P:thiamine diphosphate biosynthetic process"/>
    <property type="evidence" value="ECO:0007669"/>
    <property type="project" value="UniProtKB-UniRule"/>
</dbReference>
<dbReference type="CDD" id="cd04728">
    <property type="entry name" value="ThiG"/>
    <property type="match status" value="1"/>
</dbReference>
<dbReference type="FunFam" id="3.20.20.70:FF:000049">
    <property type="entry name" value="Thiazole synthase"/>
    <property type="match status" value="1"/>
</dbReference>
<dbReference type="Gene3D" id="3.20.20.70">
    <property type="entry name" value="Aldolase class I"/>
    <property type="match status" value="1"/>
</dbReference>
<dbReference type="HAMAP" id="MF_00443">
    <property type="entry name" value="ThiG"/>
    <property type="match status" value="1"/>
</dbReference>
<dbReference type="InterPro" id="IPR013785">
    <property type="entry name" value="Aldolase_TIM"/>
</dbReference>
<dbReference type="InterPro" id="IPR033983">
    <property type="entry name" value="Thiazole_synthase_ThiG"/>
</dbReference>
<dbReference type="InterPro" id="IPR008867">
    <property type="entry name" value="ThiG"/>
</dbReference>
<dbReference type="PANTHER" id="PTHR34266">
    <property type="entry name" value="THIAZOLE SYNTHASE"/>
    <property type="match status" value="1"/>
</dbReference>
<dbReference type="PANTHER" id="PTHR34266:SF2">
    <property type="entry name" value="THIAZOLE SYNTHASE"/>
    <property type="match status" value="1"/>
</dbReference>
<dbReference type="Pfam" id="PF05690">
    <property type="entry name" value="ThiG"/>
    <property type="match status" value="1"/>
</dbReference>
<dbReference type="SUPFAM" id="SSF110399">
    <property type="entry name" value="ThiG-like"/>
    <property type="match status" value="1"/>
</dbReference>
<name>THIG_YERPS</name>
<comment type="function">
    <text evidence="1">Catalyzes the rearrangement of 1-deoxy-D-xylulose 5-phosphate (DXP) to produce the thiazole phosphate moiety of thiamine. Sulfur is provided by the thiocarboxylate moiety of the carrier protein ThiS. In vitro, sulfur can be provided by H(2)S.</text>
</comment>
<comment type="catalytic activity">
    <reaction evidence="1">
        <text>[ThiS sulfur-carrier protein]-C-terminal-Gly-aminoethanethioate + 2-iminoacetate + 1-deoxy-D-xylulose 5-phosphate = [ThiS sulfur-carrier protein]-C-terminal Gly-Gly + 2-[(2R,5Z)-2-carboxy-4-methylthiazol-5(2H)-ylidene]ethyl phosphate + 2 H2O + H(+)</text>
        <dbReference type="Rhea" id="RHEA:26297"/>
        <dbReference type="Rhea" id="RHEA-COMP:12909"/>
        <dbReference type="Rhea" id="RHEA-COMP:19908"/>
        <dbReference type="ChEBI" id="CHEBI:15377"/>
        <dbReference type="ChEBI" id="CHEBI:15378"/>
        <dbReference type="ChEBI" id="CHEBI:57792"/>
        <dbReference type="ChEBI" id="CHEBI:62899"/>
        <dbReference type="ChEBI" id="CHEBI:77846"/>
        <dbReference type="ChEBI" id="CHEBI:90778"/>
        <dbReference type="ChEBI" id="CHEBI:232372"/>
        <dbReference type="EC" id="2.8.1.10"/>
    </reaction>
</comment>
<comment type="pathway">
    <text evidence="1">Cofactor biosynthesis; thiamine diphosphate biosynthesis.</text>
</comment>
<comment type="subunit">
    <text evidence="1">Homotetramer. Forms heterodimers with either ThiH or ThiS.</text>
</comment>
<comment type="subcellular location">
    <subcellularLocation>
        <location evidence="1">Cytoplasm</location>
    </subcellularLocation>
</comment>
<comment type="similarity">
    <text evidence="1">Belongs to the ThiG family.</text>
</comment>
<sequence length="271" mass="28887">MLKIADTTFTSRLFTGTGKFSSPELMLEALRASGSQLITMAMKRVDLQSGNDAILAPLRQLGVRLLPNTSGAKTAEEAIFAARLAREALNTHWVKLEIHPDVRYLLPDPIETLKAAEVLVKEGFVVLPYCGADPVLCKRLEEVGCAAVMPLGSPIGSNLGLRTRDFLQIIIEQSKVPVVVDAGIGAPSHALEALELGADAVLVNTAIAVAHSPVQMAHAFRLAVESGERARLAGLGASPFNPSQPDTLQLRATATSPLTGFLSQLEEQDHV</sequence>
<reference key="1">
    <citation type="journal article" date="2004" name="Proc. Natl. Acad. Sci. U.S.A.">
        <title>Insights into the evolution of Yersinia pestis through whole-genome comparison with Yersinia pseudotuberculosis.</title>
        <authorList>
            <person name="Chain P.S.G."/>
            <person name="Carniel E."/>
            <person name="Larimer F.W."/>
            <person name="Lamerdin J."/>
            <person name="Stoutland P.O."/>
            <person name="Regala W.M."/>
            <person name="Georgescu A.M."/>
            <person name="Vergez L.M."/>
            <person name="Land M.L."/>
            <person name="Motin V.L."/>
            <person name="Brubaker R.R."/>
            <person name="Fowler J."/>
            <person name="Hinnebusch J."/>
            <person name="Marceau M."/>
            <person name="Medigue C."/>
            <person name="Simonet M."/>
            <person name="Chenal-Francisque V."/>
            <person name="Souza B."/>
            <person name="Dacheux D."/>
            <person name="Elliott J.M."/>
            <person name="Derbise A."/>
            <person name="Hauser L.J."/>
            <person name="Garcia E."/>
        </authorList>
    </citation>
    <scope>NUCLEOTIDE SEQUENCE [LARGE SCALE GENOMIC DNA]</scope>
    <source>
        <strain>IP32953</strain>
    </source>
</reference>
<organism>
    <name type="scientific">Yersinia pseudotuberculosis serotype I (strain IP32953)</name>
    <dbReference type="NCBI Taxonomy" id="273123"/>
    <lineage>
        <taxon>Bacteria</taxon>
        <taxon>Pseudomonadati</taxon>
        <taxon>Pseudomonadota</taxon>
        <taxon>Gammaproteobacteria</taxon>
        <taxon>Enterobacterales</taxon>
        <taxon>Yersiniaceae</taxon>
        <taxon>Yersinia</taxon>
    </lineage>
</organism>
<evidence type="ECO:0000255" key="1">
    <source>
        <dbReference type="HAMAP-Rule" id="MF_00443"/>
    </source>
</evidence>
<protein>
    <recommendedName>
        <fullName evidence="1">Thiazole synthase</fullName>
        <ecNumber evidence="1">2.8.1.10</ecNumber>
    </recommendedName>
</protein>